<reference key="1">
    <citation type="journal article" date="2005" name="Nucleic Acids Res.">
        <title>The genome sequence of Salmonella enterica serovar Choleraesuis, a highly invasive and resistant zoonotic pathogen.</title>
        <authorList>
            <person name="Chiu C.-H."/>
            <person name="Tang P."/>
            <person name="Chu C."/>
            <person name="Hu S."/>
            <person name="Bao Q."/>
            <person name="Yu J."/>
            <person name="Chou Y.-Y."/>
            <person name="Wang H.-S."/>
            <person name="Lee Y.-S."/>
        </authorList>
    </citation>
    <scope>NUCLEOTIDE SEQUENCE [LARGE SCALE GENOMIC DNA]</scope>
    <source>
        <strain>SC-B67</strain>
    </source>
</reference>
<dbReference type="EC" id="7.6.2.-" evidence="1"/>
<dbReference type="EMBL" id="AE017220">
    <property type="protein sequence ID" value="AAX64803.1"/>
    <property type="molecule type" value="Genomic_DNA"/>
</dbReference>
<dbReference type="RefSeq" id="WP_000125882.1">
    <property type="nucleotide sequence ID" value="NC_006905.1"/>
</dbReference>
<dbReference type="SMR" id="Q57R58"/>
<dbReference type="KEGG" id="sec:SCH_0897"/>
<dbReference type="HOGENOM" id="CLU_000604_78_3_6"/>
<dbReference type="Proteomes" id="UP000000538">
    <property type="component" value="Chromosome"/>
</dbReference>
<dbReference type="GO" id="GO:0005886">
    <property type="term" value="C:plasma membrane"/>
    <property type="evidence" value="ECO:0007669"/>
    <property type="project" value="UniProtKB-SubCell"/>
</dbReference>
<dbReference type="GO" id="GO:0005524">
    <property type="term" value="F:ATP binding"/>
    <property type="evidence" value="ECO:0007669"/>
    <property type="project" value="UniProtKB-KW"/>
</dbReference>
<dbReference type="GO" id="GO:0016887">
    <property type="term" value="F:ATP hydrolysis activity"/>
    <property type="evidence" value="ECO:0007669"/>
    <property type="project" value="InterPro"/>
</dbReference>
<dbReference type="GO" id="GO:0022857">
    <property type="term" value="F:transmembrane transporter activity"/>
    <property type="evidence" value="ECO:0007669"/>
    <property type="project" value="TreeGrafter"/>
</dbReference>
<dbReference type="GO" id="GO:0046677">
    <property type="term" value="P:response to antibiotic"/>
    <property type="evidence" value="ECO:0007669"/>
    <property type="project" value="UniProtKB-KW"/>
</dbReference>
<dbReference type="CDD" id="cd03255">
    <property type="entry name" value="ABC_MJ0796_LolCDE_FtsE"/>
    <property type="match status" value="1"/>
</dbReference>
<dbReference type="FunFam" id="3.40.50.300:FF:000032">
    <property type="entry name" value="Export ABC transporter ATP-binding protein"/>
    <property type="match status" value="1"/>
</dbReference>
<dbReference type="Gene3D" id="3.40.50.300">
    <property type="entry name" value="P-loop containing nucleotide triphosphate hydrolases"/>
    <property type="match status" value="1"/>
</dbReference>
<dbReference type="InterPro" id="IPR003593">
    <property type="entry name" value="AAA+_ATPase"/>
</dbReference>
<dbReference type="InterPro" id="IPR003838">
    <property type="entry name" value="ABC3_permease_C"/>
</dbReference>
<dbReference type="InterPro" id="IPR003439">
    <property type="entry name" value="ABC_transporter-like_ATP-bd"/>
</dbReference>
<dbReference type="InterPro" id="IPR017871">
    <property type="entry name" value="ABC_transporter-like_CS"/>
</dbReference>
<dbReference type="InterPro" id="IPR017911">
    <property type="entry name" value="MacB-like_ATP-bd"/>
</dbReference>
<dbReference type="InterPro" id="IPR025857">
    <property type="entry name" value="MacB_PCD"/>
</dbReference>
<dbReference type="InterPro" id="IPR050250">
    <property type="entry name" value="Macrolide_Exporter_MacB"/>
</dbReference>
<dbReference type="InterPro" id="IPR027417">
    <property type="entry name" value="P-loop_NTPase"/>
</dbReference>
<dbReference type="NCBIfam" id="NF007826">
    <property type="entry name" value="PRK10535.1"/>
    <property type="match status" value="1"/>
</dbReference>
<dbReference type="PANTHER" id="PTHR30572:SF7">
    <property type="entry name" value="MACROLIDE EXPORT ATP-BINDING_PERMEASE PROTEIN MACB"/>
    <property type="match status" value="1"/>
</dbReference>
<dbReference type="PANTHER" id="PTHR30572">
    <property type="entry name" value="MEMBRANE COMPONENT OF TRANSPORTER-RELATED"/>
    <property type="match status" value="1"/>
</dbReference>
<dbReference type="Pfam" id="PF00005">
    <property type="entry name" value="ABC_tran"/>
    <property type="match status" value="1"/>
</dbReference>
<dbReference type="Pfam" id="PF02687">
    <property type="entry name" value="FtsX"/>
    <property type="match status" value="1"/>
</dbReference>
<dbReference type="Pfam" id="PF12704">
    <property type="entry name" value="MacB_PCD"/>
    <property type="match status" value="1"/>
</dbReference>
<dbReference type="SMART" id="SM00382">
    <property type="entry name" value="AAA"/>
    <property type="match status" value="1"/>
</dbReference>
<dbReference type="SUPFAM" id="SSF52540">
    <property type="entry name" value="P-loop containing nucleoside triphosphate hydrolases"/>
    <property type="match status" value="1"/>
</dbReference>
<dbReference type="PROSITE" id="PS00211">
    <property type="entry name" value="ABC_TRANSPORTER_1"/>
    <property type="match status" value="1"/>
</dbReference>
<dbReference type="PROSITE" id="PS50893">
    <property type="entry name" value="ABC_TRANSPORTER_2"/>
    <property type="match status" value="1"/>
</dbReference>
<dbReference type="PROSITE" id="PS51267">
    <property type="entry name" value="MACB"/>
    <property type="match status" value="1"/>
</dbReference>
<gene>
    <name evidence="1" type="primary">macB</name>
    <name type="ordered locus">SCH_0897</name>
</gene>
<feature type="chain" id="PRO_0000269974" description="Macrolide export ATP-binding/permease protein MacB">
    <location>
        <begin position="1"/>
        <end position="648"/>
    </location>
</feature>
<feature type="transmembrane region" description="Helical" evidence="1">
    <location>
        <begin position="273"/>
        <end position="293"/>
    </location>
</feature>
<feature type="transmembrane region" description="Helical" evidence="1">
    <location>
        <begin position="417"/>
        <end position="437"/>
    </location>
</feature>
<feature type="transmembrane region" description="Helical" evidence="1">
    <location>
        <begin position="523"/>
        <end position="543"/>
    </location>
</feature>
<feature type="transmembrane region" description="Helical" evidence="1">
    <location>
        <begin position="577"/>
        <end position="597"/>
    </location>
</feature>
<feature type="transmembrane region" description="Helical" evidence="1">
    <location>
        <begin position="611"/>
        <end position="631"/>
    </location>
</feature>
<feature type="domain" description="ABC transporter" evidence="1">
    <location>
        <begin position="5"/>
        <end position="243"/>
    </location>
</feature>
<feature type="binding site" evidence="1">
    <location>
        <begin position="41"/>
        <end position="48"/>
    </location>
    <ligand>
        <name>ATP</name>
        <dbReference type="ChEBI" id="CHEBI:30616"/>
    </ligand>
</feature>
<protein>
    <recommendedName>
        <fullName evidence="1">Macrolide export ATP-binding/permease protein MacB</fullName>
        <ecNumber evidence="1">7.6.2.-</ecNumber>
    </recommendedName>
</protein>
<keyword id="KW-0046">Antibiotic resistance</keyword>
<keyword id="KW-0067">ATP-binding</keyword>
<keyword id="KW-0997">Cell inner membrane</keyword>
<keyword id="KW-1003">Cell membrane</keyword>
<keyword id="KW-0472">Membrane</keyword>
<keyword id="KW-0547">Nucleotide-binding</keyword>
<keyword id="KW-1278">Translocase</keyword>
<keyword id="KW-0812">Transmembrane</keyword>
<keyword id="KW-1133">Transmembrane helix</keyword>
<keyword id="KW-0813">Transport</keyword>
<organism>
    <name type="scientific">Salmonella choleraesuis (strain SC-B67)</name>
    <dbReference type="NCBI Taxonomy" id="321314"/>
    <lineage>
        <taxon>Bacteria</taxon>
        <taxon>Pseudomonadati</taxon>
        <taxon>Pseudomonadota</taxon>
        <taxon>Gammaproteobacteria</taxon>
        <taxon>Enterobacterales</taxon>
        <taxon>Enterobacteriaceae</taxon>
        <taxon>Salmonella</taxon>
    </lineage>
</organism>
<sequence>MTALLELCNVSRSYPSGEEQVAVLKDISLQIHAGEMVAIVGVSGSGKSTLMNILGCLDKPTSGTYRVAGRDVSTLDPDALAQLRREHFGFIFQRYHLLSHLTAAQNVEIPAVYAGIERKKRQTRARELLLRLGLSDRVDYPPSQLSGGQQQRVSIARALMNGGQVILADEPTGALDSHSGEEVMAILRQLRDRGHTVIIVTHDPLIAAQAERIIEIHDGKIVHNPPAQEKKREQGVDAAVVNTAPGWRQFASSFREALSMAWLAMAANKMRTLLTMLGIIIGIASVVSIVVVGDAAKQMVLADIRAMGTNTIDIHPGKDFGDDNPQYRQALKYDDLVAIQKQPWVNSATPSVSKSLRLRYGNIDIAVNANGVSGDYFNVYGMSFREGNTFNAVQQQDRAQVVVLDANTRRQLFPNKANVVGEVVLAGNMPVIVIGVAEEKPSMYGNSNLLQVWLPYSTMSDRIMGQSWLNSITVRVKDGVDSDQAEQQLTRLLTLRHGKKDFFTWNMDSVLKTAEKTTYTLQLFLTLVAVISLVVGGIGVMNIMLVSVTERTREIGIRMAVGARASDVLQQFLIEAVLVCLVGGALGISLSMFIAFMLQLFLPGWEIGFSLTALASAFLCSTFTGILFGWLPARNAARLDPVDALARE</sequence>
<comment type="function">
    <text evidence="1">Part of the tripartite efflux system MacAB-TolC. MacB is a non-canonical ABC transporter that contains transmembrane domains (TMD), which form a pore in the inner membrane, and an ATP-binding domain (NBD), which is responsible for energy generation. Confers resistance against macrolides.</text>
</comment>
<comment type="subunit">
    <text evidence="1">Homodimer. Part of the tripartite efflux system MacAB-TolC, which is composed of an inner membrane transporter, MacB, a periplasmic membrane fusion protein, MacA, and an outer membrane component, TolC. The complex forms a large protein conduit and can translocate molecules across both the inner and outer membranes. Interacts with MacA.</text>
</comment>
<comment type="subcellular location">
    <subcellularLocation>
        <location evidence="1">Cell inner membrane</location>
        <topology evidence="1">Multi-pass membrane protein</topology>
    </subcellularLocation>
</comment>
<comment type="similarity">
    <text evidence="1">Belongs to the ABC transporter superfamily. Macrolide exporter (TC 3.A.1.122) family.</text>
</comment>
<evidence type="ECO:0000255" key="1">
    <source>
        <dbReference type="HAMAP-Rule" id="MF_01720"/>
    </source>
</evidence>
<accession>Q57R58</accession>
<proteinExistence type="inferred from homology"/>
<name>MACB_SALCH</name>